<organism>
    <name type="scientific">Vaccinia virus (strain Copenhagen)</name>
    <name type="common">VACV</name>
    <dbReference type="NCBI Taxonomy" id="10249"/>
    <lineage>
        <taxon>Viruses</taxon>
        <taxon>Varidnaviria</taxon>
        <taxon>Bamfordvirae</taxon>
        <taxon>Nucleocytoviricota</taxon>
        <taxon>Pokkesviricetes</taxon>
        <taxon>Chitovirales</taxon>
        <taxon>Poxviridae</taxon>
        <taxon>Chordopoxvirinae</taxon>
        <taxon>Orthopoxvirus</taxon>
        <taxon>Vaccinia virus</taxon>
    </lineage>
</organism>
<evidence type="ECO:0000250" key="1">
    <source>
        <dbReference type="UniProtKB" id="P68606"/>
    </source>
</evidence>
<evidence type="ECO:0000255" key="2"/>
<evidence type="ECO:0000305" key="3"/>
<keyword id="KW-0426">Late protein</keyword>
<keyword id="KW-0472">Membrane</keyword>
<keyword id="KW-1185">Reference proteome</keyword>
<keyword id="KW-0812">Transmembrane</keyword>
<keyword id="KW-1133">Transmembrane helix</keyword>
<keyword id="KW-1162">Viral penetration into host cytoplasm</keyword>
<keyword id="KW-0946">Virion</keyword>
<keyword id="KW-1160">Virus entry into host cell</keyword>
<comment type="function">
    <text evidence="1">Late protein which probably plays a role in virus entry into the host cell.</text>
</comment>
<comment type="subcellular location">
    <subcellularLocation>
        <location evidence="1">Virion membrane</location>
        <topology evidence="1">Single-pass membrane protein</topology>
    </subcellularLocation>
    <text evidence="1">Component of the membrane of the mature virion.</text>
</comment>
<comment type="induction">
    <text>Expressed in the late phase of the viral replicative cycle.</text>
</comment>
<comment type="similarity">
    <text evidence="3">Belongs to the orthopoxvirus OPG078 family.</text>
</comment>
<sequence>MDKLYAAIFGVFMGSPEDDLTDFIEIVKSVLSDEKTVTSTNNTGCWGWYWLIIIFFIVLILLLLIYLYLKVVW</sequence>
<name>PG078_VACCC</name>
<feature type="chain" id="PRO_0000099566" description="Protein OPG078">
    <location>
        <begin position="1"/>
        <end position="73"/>
    </location>
</feature>
<feature type="transmembrane region" description="Helical" evidence="2">
    <location>
        <begin position="49"/>
        <end position="69"/>
    </location>
</feature>
<protein>
    <recommendedName>
        <fullName>Protein OPG078</fullName>
    </recommendedName>
    <alternativeName>
        <fullName>Protein I2</fullName>
    </alternativeName>
</protein>
<proteinExistence type="evidence at transcript level"/>
<accession>P68604</accession>
<accession>P12922</accession>
<reference key="1">
    <citation type="journal article" date="1990" name="Virology">
        <title>The complete DNA sequence of vaccinia virus.</title>
        <authorList>
            <person name="Goebel S.J."/>
            <person name="Johnson G.P."/>
            <person name="Perkus M.E."/>
            <person name="Davis S.W."/>
            <person name="Winslow J.P."/>
            <person name="Paoletti E."/>
        </authorList>
    </citation>
    <scope>NUCLEOTIDE SEQUENCE [LARGE SCALE GENOMIC DNA]</scope>
</reference>
<reference key="2">
    <citation type="journal article" date="1990" name="Virology">
        <title>Appendix to 'The complete DNA sequence of vaccinia virus'.</title>
        <authorList>
            <person name="Goebel S.J."/>
            <person name="Johnson G.P."/>
            <person name="Perkus M.E."/>
            <person name="Davis S.W."/>
            <person name="Winslow J.P."/>
            <person name="Paoletti E."/>
        </authorList>
    </citation>
    <scope>NUCLEOTIDE SEQUENCE [LARGE SCALE GENOMIC DNA]</scope>
</reference>
<dbReference type="EMBL" id="M35027">
    <property type="protein sequence ID" value="AAA48057.1"/>
    <property type="molecule type" value="Genomic_DNA"/>
</dbReference>
<dbReference type="PIR" id="B29889">
    <property type="entry name" value="WZVZI2"/>
</dbReference>
<dbReference type="Proteomes" id="UP000008269">
    <property type="component" value="Segment"/>
</dbReference>
<dbReference type="GO" id="GO:0016020">
    <property type="term" value="C:membrane"/>
    <property type="evidence" value="ECO:0007669"/>
    <property type="project" value="UniProtKB-KW"/>
</dbReference>
<dbReference type="GO" id="GO:0055036">
    <property type="term" value="C:virion membrane"/>
    <property type="evidence" value="ECO:0007669"/>
    <property type="project" value="UniProtKB-SubCell"/>
</dbReference>
<dbReference type="GO" id="GO:0046718">
    <property type="term" value="P:symbiont entry into host cell"/>
    <property type="evidence" value="ECO:0007669"/>
    <property type="project" value="UniProtKB-KW"/>
</dbReference>
<dbReference type="InterPro" id="IPR009175">
    <property type="entry name" value="Poxvirus_I2"/>
</dbReference>
<dbReference type="Pfam" id="PF12575">
    <property type="entry name" value="Pox_EPC_I2-L1"/>
    <property type="match status" value="1"/>
</dbReference>
<dbReference type="PIRSF" id="PIRSF003766">
    <property type="entry name" value="VAC_I2L"/>
    <property type="match status" value="1"/>
</dbReference>
<organismHost>
    <name type="scientific">Homo sapiens</name>
    <name type="common">Human</name>
    <dbReference type="NCBI Taxonomy" id="9606"/>
</organismHost>
<gene>
    <name type="primary">OPG078</name>
    <name type="ORF">I2L</name>
</gene>